<comment type="function">
    <molecule>Glycoprotein N</molecule>
    <text evidence="2 4">Forms homotetramers with glycoprotein C at the surface of the virion (By similarity). Attaches the virion to host cell receptors including integrin ITGAV/ITGB3 (By similarity). This attachment induces virion internalization predominantly through clathrin-dependent endocytosis (By similarity). Mediates the assembly and budding of infectious virus particles through its interaction with the nucleocapsid protein and the viral genome (By similarity). May dysregulate normal immune and endothelial cell responses through an ITAM motif (By similarity). Translocates to mitochondria, binds to host TUFM and recruits MAP1LC3B (By similarity). These interactions induce mitochondrial autophagy and therefore destruction of host MAVS leading to inhibition of type I interferon (IFN) responses (By similarity). Concomitant breakdown of glycoprotein N is apparently prevented by the nucleoprotein that may inhibit Gn-stimulated autophagosome-lysosome fusion (By similarity). Interacts with the viral genomic RNA (By similarity).</text>
</comment>
<comment type="function">
    <molecule>Glycoprotein C</molecule>
    <text evidence="2">Forms homotetramers with glycoprotein N at the surface of the virion. Attaches the virion to host cell receptors including integrin ITGAV/ITGB3. This attachment induces virion internalization predominantly through clathrin-dependent endocytosis. Class II fusion protein that promotes fusion of viral membrane with host endosomal membrane after endocytosis of the virion.</text>
</comment>
<comment type="subunit">
    <molecule>Glycoprotein N</molecule>
    <text evidence="2 3">Homodimer (By similarity). Homotetramer; forms heterotetrameric Gn-Gc spikes in the pre-fusion conformation (By similarity). Interacts (via C-terminus) with the nucleoprotein (By similarity). Interacts with host TUFM; this interaction contributes to the virus-induced degradation of mitochondria by autophagy, which leads to degradation of host MAVS and inhibition of type I interferon (IFN) responses (By similarity). Interacts with host MAP1LC3B; this interaction contributes to the virus-induced degradation of mitochondria by autophagy, which leads to degradation of host MAVS and inhibition of type I interferon (IFN) responses (By similarity).</text>
</comment>
<comment type="subunit">
    <molecule>Glycoprotein C</molecule>
    <text evidence="2 4 8">Homodimer. Homotetramer; forms heterotetrameric Gn-Gc spikes in the pre-fusion conformation (By similarity). Homotrimer; forms homotrimer in the post-fusion conformation at acidic pH (PubMed:27783673). Interacts (via C-terminus) with the nucleoprotein (By similarity).</text>
</comment>
<comment type="subcellular location">
    <molecule>Glycoprotein N</molecule>
    <subcellularLocation>
        <location evidence="2">Virion membrane</location>
        <topology evidence="9">Multi-pass membrane protein</topology>
    </subcellularLocation>
    <subcellularLocation>
        <location evidence="2">Host cell surface</location>
    </subcellularLocation>
    <subcellularLocation>
        <location evidence="2">Host Golgi apparatus membrane</location>
        <topology evidence="2">Multi-pass membrane protein</topology>
    </subcellularLocation>
    <subcellularLocation>
        <location evidence="2">Host endoplasmic reticulum membrane</location>
        <topology evidence="2">Multi-pass membrane protein</topology>
    </subcellularLocation>
    <subcellularLocation>
        <location evidence="2">Host mitochondrion</location>
    </subcellularLocation>
    <text evidence="4">Interaction between glycoprotein N and glycoprotein C is essential for proper targeting of glycoprotein N to the host Golgi complex, where virion budding occurs.</text>
</comment>
<comment type="subcellular location">
    <molecule>Glycoprotein C</molecule>
    <subcellularLocation>
        <location evidence="2">Virion membrane</location>
        <topology evidence="9">Single-pass type I membrane protein</topology>
    </subcellularLocation>
    <subcellularLocation>
        <location evidence="2">Host cell surface</location>
    </subcellularLocation>
    <subcellularLocation>
        <location evidence="2">Host Golgi apparatus membrane</location>
        <topology evidence="2">Single-pass type I membrane protein</topology>
    </subcellularLocation>
    <subcellularLocation>
        <location evidence="2">Host endoplasmic reticulum membrane</location>
        <topology evidence="2">Single-pass type I membrane protein</topology>
    </subcellularLocation>
    <text evidence="2 9">Budding probably takes place at the host Golgi (Probable). Glycoprotein C cytoplasmic tail is important for efficient Golgi localization (By similarity).</text>
</comment>
<comment type="domain">
    <molecule>Glycoprotein N</molecule>
    <text evidence="2 3 4 5">The YxxL motif at the C-terminus is indispensable for the interaction with MAP1LC3B and for the Gn-mediated induction of mitochondrial autophagy (By similarity). The cytoplasmic tail is involved in the inhibition of the host innate immune response (By similarity). The C-terminus of the cytoplasmic tail is involved in binding to the viral genome and the nucleocapsid (By similarity). Contains 2 contiguous zinc-fingers (By similarity).</text>
</comment>
<comment type="domain">
    <molecule>Glycoprotein C</molecule>
    <text evidence="4">The C-terminus is necessary for proper localization in the Golgi (By similarity). The cytoplasmic tail is involved in binding to the nucleocapsid (By similarity).</text>
</comment>
<comment type="PTM">
    <molecule>Envelopment polyprotein</molecule>
    <text evidence="2">Envelope polyprotein precursor is quickly cleaved in vivo just after synthesis, presumably by host signal peptidase.</text>
</comment>
<comment type="similarity">
    <text evidence="9">Belongs to the hantavirus envelope glycoprotein family.</text>
</comment>
<organismHost>
    <name type="scientific">Homo sapiens</name>
    <name type="common">Human</name>
    <dbReference type="NCBI Taxonomy" id="9606"/>
</organismHost>
<organismHost>
    <name type="scientific">Myodes glareolus</name>
    <name type="common">Bank vole</name>
    <name type="synonym">Clethrionomys glareolus</name>
    <dbReference type="NCBI Taxonomy" id="447135"/>
</organismHost>
<keyword id="KW-0002">3D-structure</keyword>
<keyword id="KW-1015">Disulfide bond</keyword>
<keyword id="KW-1170">Fusion of virus membrane with host endosomal membrane</keyword>
<keyword id="KW-1168">Fusion of virus membrane with host membrane</keyword>
<keyword id="KW-0325">Glycoprotein</keyword>
<keyword id="KW-1038">Host endoplasmic reticulum</keyword>
<keyword id="KW-1040">Host Golgi apparatus</keyword>
<keyword id="KW-1043">Host membrane</keyword>
<keyword id="KW-1045">Host mitochondrion</keyword>
<keyword id="KW-0945">Host-virus interaction</keyword>
<keyword id="KW-1090">Inhibition of host innate immune response by virus</keyword>
<keyword id="KW-1113">Inhibition of host RLR pathway by virus</keyword>
<keyword id="KW-1110">Inhibition of host TRAFs by virus</keyword>
<keyword id="KW-0472">Membrane</keyword>
<keyword id="KW-0479">Metal-binding</keyword>
<keyword id="KW-0597">Phosphoprotein</keyword>
<keyword id="KW-0677">Repeat</keyword>
<keyword id="KW-0732">Signal</keyword>
<keyword id="KW-0812">Transmembrane</keyword>
<keyword id="KW-1133">Transmembrane helix</keyword>
<keyword id="KW-1161">Viral attachment to host cell</keyword>
<keyword id="KW-0899">Viral immunoevasion</keyword>
<keyword id="KW-1162">Viral penetration into host cytoplasm</keyword>
<keyword id="KW-0946">Virion</keyword>
<keyword id="KW-1160">Virus entry into host cell</keyword>
<keyword id="KW-0862">Zinc</keyword>
<keyword id="KW-0863">Zinc-finger</keyword>
<gene>
    <name type="primary">GP</name>
</gene>
<accession>P41266</accession>
<protein>
    <recommendedName>
        <fullName>Envelopment polyprotein</fullName>
    </recommendedName>
    <alternativeName>
        <fullName>M polyprotein</fullName>
    </alternativeName>
    <component>
        <recommendedName>
            <fullName evidence="2">Glycoprotein N</fullName>
            <shortName>Gn</shortName>
        </recommendedName>
        <alternativeName>
            <fullName>Glycoprotein G1</fullName>
        </alternativeName>
    </component>
    <component>
        <recommendedName>
            <fullName evidence="2">Glycoprotein C</fullName>
            <shortName>Gc</shortName>
        </recommendedName>
        <alternativeName>
            <fullName>Glycoprotein G2</fullName>
        </alternativeName>
    </component>
</protein>
<proteinExistence type="evidence at protein level"/>
<dbReference type="EMBL" id="L08755">
    <property type="protein sequence ID" value="AAC37848.1"/>
    <property type="molecule type" value="Unassigned_RNA"/>
</dbReference>
<dbReference type="PDB" id="5J81">
    <property type="method" value="X-ray"/>
    <property type="resolution" value="1.80 A"/>
    <property type="chains" value="A=659-1106"/>
</dbReference>
<dbReference type="PDB" id="5J9H">
    <property type="method" value="X-ray"/>
    <property type="resolution" value="2.50 A"/>
    <property type="chains" value="A=659-1106"/>
</dbReference>
<dbReference type="PDBsum" id="5J81"/>
<dbReference type="PDBsum" id="5J9H"/>
<dbReference type="SMR" id="P41266"/>
<dbReference type="GlyCosmos" id="P41266">
    <property type="glycosylation" value="4 sites, No reported glycans"/>
</dbReference>
<dbReference type="iPTMnet" id="P41266"/>
<dbReference type="GO" id="GO:0044167">
    <property type="term" value="C:host cell endoplasmic reticulum membrane"/>
    <property type="evidence" value="ECO:0007669"/>
    <property type="project" value="UniProtKB-SubCell"/>
</dbReference>
<dbReference type="GO" id="GO:0044178">
    <property type="term" value="C:host cell Golgi membrane"/>
    <property type="evidence" value="ECO:0007669"/>
    <property type="project" value="UniProtKB-SubCell"/>
</dbReference>
<dbReference type="GO" id="GO:0033650">
    <property type="term" value="C:host cell mitochondrion"/>
    <property type="evidence" value="ECO:0007669"/>
    <property type="project" value="UniProtKB-SubCell"/>
</dbReference>
<dbReference type="GO" id="GO:0044228">
    <property type="term" value="C:host cell surface"/>
    <property type="evidence" value="ECO:0007669"/>
    <property type="project" value="UniProtKB-SubCell"/>
</dbReference>
<dbReference type="GO" id="GO:0016020">
    <property type="term" value="C:membrane"/>
    <property type="evidence" value="ECO:0007669"/>
    <property type="project" value="UniProtKB-KW"/>
</dbReference>
<dbReference type="GO" id="GO:0055036">
    <property type="term" value="C:virion membrane"/>
    <property type="evidence" value="ECO:0007669"/>
    <property type="project" value="UniProtKB-SubCell"/>
</dbReference>
<dbReference type="GO" id="GO:0008270">
    <property type="term" value="F:zinc ion binding"/>
    <property type="evidence" value="ECO:0007669"/>
    <property type="project" value="UniProtKB-KW"/>
</dbReference>
<dbReference type="GO" id="GO:0039654">
    <property type="term" value="P:fusion of virus membrane with host endosome membrane"/>
    <property type="evidence" value="ECO:0007669"/>
    <property type="project" value="UniProtKB-KW"/>
</dbReference>
<dbReference type="GO" id="GO:0007165">
    <property type="term" value="P:signal transduction"/>
    <property type="evidence" value="ECO:0007669"/>
    <property type="project" value="InterPro"/>
</dbReference>
<dbReference type="GO" id="GO:0046718">
    <property type="term" value="P:symbiont entry into host cell"/>
    <property type="evidence" value="ECO:0007669"/>
    <property type="project" value="UniProtKB-KW"/>
</dbReference>
<dbReference type="GO" id="GO:0052170">
    <property type="term" value="P:symbiont-mediated suppression of host innate immune response"/>
    <property type="evidence" value="ECO:0007669"/>
    <property type="project" value="UniProtKB-KW"/>
</dbReference>
<dbReference type="GO" id="GO:0039527">
    <property type="term" value="P:symbiont-mediated suppression of host TRAF-mediated signal transduction"/>
    <property type="evidence" value="ECO:0007669"/>
    <property type="project" value="UniProtKB-KW"/>
</dbReference>
<dbReference type="GO" id="GO:0019062">
    <property type="term" value="P:virion attachment to host cell"/>
    <property type="evidence" value="ECO:0007669"/>
    <property type="project" value="UniProtKB-KW"/>
</dbReference>
<dbReference type="Gene3D" id="1.10.8.1320">
    <property type="match status" value="1"/>
</dbReference>
<dbReference type="InterPro" id="IPR016402">
    <property type="entry name" value="Envelope_glycoprot_Hantavirus"/>
</dbReference>
<dbReference type="InterPro" id="IPR048791">
    <property type="entry name" value="Gc_C_bunya"/>
</dbReference>
<dbReference type="InterPro" id="IPR048790">
    <property type="entry name" value="Gn-B_hanta"/>
</dbReference>
<dbReference type="InterPro" id="IPR002532">
    <property type="entry name" value="Hanta_Gc_N"/>
</dbReference>
<dbReference type="InterPro" id="IPR002534">
    <property type="entry name" value="Hanta_Gn-H"/>
</dbReference>
<dbReference type="InterPro" id="IPR012316">
    <property type="entry name" value="ITAM_motif_hantavir-typ"/>
</dbReference>
<dbReference type="Pfam" id="PF20682">
    <property type="entry name" value="Hanta_Gc_C"/>
    <property type="match status" value="1"/>
</dbReference>
<dbReference type="Pfam" id="PF01561">
    <property type="entry name" value="Hanta_Gc_N"/>
    <property type="match status" value="1"/>
</dbReference>
<dbReference type="Pfam" id="PF20679">
    <property type="entry name" value="Hanta_Gn-B"/>
    <property type="match status" value="1"/>
</dbReference>
<dbReference type="Pfam" id="PF01567">
    <property type="entry name" value="Hanta_Gn-H"/>
    <property type="match status" value="1"/>
</dbReference>
<dbReference type="Pfam" id="PF10538">
    <property type="entry name" value="ITAM_Cys-rich"/>
    <property type="match status" value="1"/>
</dbReference>
<dbReference type="PIRSF" id="PIRSF003945">
    <property type="entry name" value="M_poly_HantaV"/>
    <property type="match status" value="1"/>
</dbReference>
<dbReference type="PROSITE" id="PS51056">
    <property type="entry name" value="ITAM_2"/>
    <property type="match status" value="1"/>
</dbReference>
<sequence length="1148" mass="126574">MGELSPVCLCLLLQGLLLCNTGAARNLNELKMECPHTIRLGQGLVVGSVELPSLPIQQVETLKLESSCNFDLHTSTAGQQSFTKWTWEIKGDLAENTQASSTSFQTKSSEVNLRGLCLIPTLVVETAARMRKTIACYDLSCNQTVCQPTVYLMGPIQTCITTKSCLLSLGDQRIQVNYEKTYCVSGQLVEGICFNPIHTMALSQPSHTYDIMTMMVRCFLVIKKVTSGDSMKIEKNFETLVQKNGCTANNFQGYYICLIGSSSEPLYVPALDDYRSAEVLSRMAFAPHGEDHDIEKNAVSAMRIAGKVTGKAPSTESSDTVQGIAFSGSPLYTSTGVLTSKDDPVYIWAPGIIMEGNHSICEKKTLPLTWTGFISLPGEIEKTTQCTVFCTLAGPGADCEAYSETGIFNISSPTCLINRVQRFRGSEQQIKFVCQRVDMDITVYCNGMKKVILTKTLVIGQCIYTFTSIFSLIPGVAHSLAVELCVPGLHGWATMLLLLTFCFGWVLIPTITMILLKILIAFAYLCSKYNTDSKFRILIEKVKREYQKTMGSMVCEVCQYECETAKELESHRKSCSIGSCPYCLNPSEATTSALQAHFKVCKLTSRFQENLRKSLTVYEPMQGCYRTLSLFRYRSRFFVGLVWCVLLVLELIVWAASAETQNLNAGWTDTAHGSGIIPMKTDLELDFSLPSSASYTYRRQLQNPANEQEKIPFHLQLSKQVIHAEIQHLGHWMDATFNLKTAFHCYGSCEKYAYPWQTAGCFIEKDYEYETGWGCNPPDCPGVGTGCTACGVYLDKLKSVGKVFKIVSLRYTRKVCIQLGTEQTCKTVDSNDCLITTSVKVCLIGTISKFQPSDTLLFLGPLQQGGLIFKQWCTTTCQFGDPGDIMSTPTGMKCPELNGSFRKKCAFATTPVCQFDGNTISGYKRMIATKDSFQSFNVTEPHISTSALEWIDPDSSLRDHINVIVSRDLSFQDLSETPCQIDLATASIDGAWGSGVGFNLVCTVSLTECSAFLTSIKACDAAMCYGSTTANLVRGQNTIHIVGKGGHSGSKFMCCHDTKCSSTGLVAAAPHLDRVTGYNQADSDKIFDDGAPECGMSCWFKKSGEWILGVLNGNWMVVAVLVVLLILSILLFTLCCPRRPSYRKEHKP</sequence>
<evidence type="ECO:0000250" key="1"/>
<evidence type="ECO:0000250" key="2">
    <source>
        <dbReference type="UniProtKB" id="P08668"/>
    </source>
</evidence>
<evidence type="ECO:0000250" key="3">
    <source>
        <dbReference type="UniProtKB" id="P0DTJ1"/>
    </source>
</evidence>
<evidence type="ECO:0000250" key="4">
    <source>
        <dbReference type="UniProtKB" id="P27312"/>
    </source>
</evidence>
<evidence type="ECO:0000250" key="5">
    <source>
        <dbReference type="UniProtKB" id="Q9E006"/>
    </source>
</evidence>
<evidence type="ECO:0000255" key="6"/>
<evidence type="ECO:0000255" key="7">
    <source>
        <dbReference type="PROSITE-ProRule" id="PRU00379"/>
    </source>
</evidence>
<evidence type="ECO:0000269" key="8">
    <source>
    </source>
</evidence>
<evidence type="ECO:0000305" key="9"/>
<evidence type="ECO:0007744" key="10">
    <source>
        <dbReference type="PDB" id="5J81"/>
    </source>
</evidence>
<evidence type="ECO:0007744" key="11">
    <source>
        <dbReference type="PDB" id="5J9H"/>
    </source>
</evidence>
<evidence type="ECO:0007829" key="12">
    <source>
        <dbReference type="PDB" id="5J81"/>
    </source>
</evidence>
<evidence type="ECO:0007829" key="13">
    <source>
        <dbReference type="PDB" id="5J9H"/>
    </source>
</evidence>
<organism>
    <name type="scientific">Puumala virus (strain P360)</name>
    <dbReference type="NCBI Taxonomy" id="39001"/>
    <lineage>
        <taxon>Viruses</taxon>
        <taxon>Riboviria</taxon>
        <taxon>Orthornavirae</taxon>
        <taxon>Negarnaviricota</taxon>
        <taxon>Polyploviricotina</taxon>
        <taxon>Ellioviricetes</taxon>
        <taxon>Bunyavirales</taxon>
        <taxon>Hantaviridae</taxon>
        <taxon>Mammantavirinae</taxon>
        <taxon>Orthohantavirus</taxon>
        <taxon>Orthohantavirus puumalaense</taxon>
    </lineage>
</organism>
<reference key="1">
    <citation type="journal article" date="1993" name="Virus Res.">
        <title>Nucleotide and deduced amino acid sequences of the M and S genome segments of two Puumala virus isolates from Russia.</title>
        <authorList>
            <person name="Xiao S.Y."/>
            <person name="Spik K.W."/>
            <person name="Li D."/>
            <person name="Schmaljohn C.S."/>
        </authorList>
    </citation>
    <scope>NUCLEOTIDE SEQUENCE</scope>
</reference>
<reference key="2">
    <citation type="journal article" date="2014" name="Viruses">
        <title>Hantavirus Gn and Gc envelope glycoproteins: key structural units for virus cell entry and virus assembly.</title>
        <authorList>
            <person name="Cifuentes-Munoz N."/>
            <person name="Salazar-Quiroz N."/>
            <person name="Tischler N.D."/>
        </authorList>
    </citation>
    <scope>REVIEW</scope>
</reference>
<reference evidence="10 11" key="3">
    <citation type="journal article" date="2016" name="PLoS Pathog.">
        <title>Crystal Structure of Glycoprotein C from a Hantavirus in the Post-fusion Conformation.</title>
        <authorList>
            <person name="Willensky S."/>
            <person name="Bar-Rogovsky H."/>
            <person name="Bignon E.A."/>
            <person name="Tischler N.D."/>
            <person name="Modis Y."/>
            <person name="Dessau M."/>
        </authorList>
    </citation>
    <scope>X-RAY CRYSTALLOGRAPHY (1.80 ANGSTROMS) OF 659-1106</scope>
    <scope>GLYCOSYLATION AT ASN-937</scope>
    <scope>ABSENCE OF GLYCOSYLATION AT ASN-898</scope>
</reference>
<feature type="signal peptide" evidence="6">
    <location>
        <begin position="1"/>
        <end position="23"/>
    </location>
</feature>
<feature type="chain" id="PRO_0000036828" description="Envelopment polyprotein">
    <location>
        <begin position="24"/>
        <end position="1148"/>
    </location>
</feature>
<feature type="chain" id="PRO_0000036829" description="Glycoprotein N" evidence="1">
    <location>
        <begin position="24"/>
        <end position="658"/>
    </location>
</feature>
<feature type="chain" id="PRO_0000036830" description="Glycoprotein C" evidence="1">
    <location>
        <begin position="659"/>
        <end position="1148"/>
    </location>
</feature>
<feature type="topological domain" description="Lumenal" evidence="6">
    <location>
        <begin position="24"/>
        <end position="496"/>
    </location>
</feature>
<feature type="transmembrane region" description="Helical" evidence="6">
    <location>
        <begin position="497"/>
        <end position="517"/>
    </location>
</feature>
<feature type="topological domain" description="Cytoplasmic" evidence="6">
    <location>
        <begin position="518"/>
        <end position="637"/>
    </location>
</feature>
<feature type="transmembrane region" description="Helical" evidence="6">
    <location>
        <begin position="638"/>
        <end position="658"/>
    </location>
</feature>
<feature type="topological domain" description="Lumenal" evidence="6">
    <location>
        <begin position="659"/>
        <end position="1115"/>
    </location>
</feature>
<feature type="transmembrane region" description="Helical" evidence="6">
    <location>
        <begin position="1116"/>
        <end position="1136"/>
    </location>
</feature>
<feature type="topological domain" description="Cytoplasmic" evidence="6">
    <location>
        <begin position="1137"/>
        <end position="1148"/>
    </location>
</feature>
<feature type="domain" description="ITAM" evidence="7">
    <location>
        <begin position="621"/>
        <end position="644"/>
    </location>
</feature>
<feature type="zinc finger region" description="CCHC-type 1" evidence="5">
    <location>
        <begin position="555"/>
        <end position="575"/>
    </location>
</feature>
<feature type="zinc finger region" description="CCHC-type 2" evidence="5">
    <location>
        <begin position="580"/>
        <end position="601"/>
    </location>
</feature>
<feature type="region of interest" description="Binding to the ribonucleoprotein" evidence="5">
    <location>
        <begin position="526"/>
        <end position="543"/>
    </location>
</feature>
<feature type="region of interest" description="Binding to the ribonucleoprotein" evidence="4">
    <location>
        <begin position="598"/>
        <end position="615"/>
    </location>
</feature>
<feature type="region of interest" description="Binding to the ribonucleoprotein" evidence="5">
    <location>
        <begin position="602"/>
        <end position="613"/>
    </location>
</feature>
<feature type="region of interest" description="Binding to the ribonucleoprotein" evidence="4">
    <location>
        <begin position="621"/>
        <end position="635"/>
    </location>
</feature>
<feature type="region of interest" description="Fusion loop" evidence="8">
    <location>
        <begin position="767"/>
        <end position="787"/>
    </location>
</feature>
<feature type="region of interest" description="Binding to the ribonucleoprotein" evidence="4">
    <location>
        <begin position="1131"/>
        <end position="1148"/>
    </location>
</feature>
<feature type="region of interest" description="Binding to the ribonucleoprotein" evidence="4">
    <location>
        <begin position="1131"/>
        <end position="1143"/>
    </location>
</feature>
<feature type="short sequence motif" description="YxxL" evidence="2">
    <location>
        <begin position="625"/>
        <end position="628"/>
    </location>
</feature>
<feature type="site" description="Cleavage; by host signal peptidase" evidence="2">
    <location>
        <begin position="658"/>
        <end position="659"/>
    </location>
</feature>
<feature type="glycosylation site" description="N-linked (GlcNAc...) asparagine; by host" evidence="6">
    <location>
        <position position="142"/>
    </location>
</feature>
<feature type="glycosylation site" description="N-linked (GlcNAc...) asparagine; by host" evidence="6">
    <location>
        <position position="357"/>
    </location>
</feature>
<feature type="glycosylation site" description="N-linked (GlcNAc...) asparagine; by host" evidence="6">
    <location>
        <position position="409"/>
    </location>
</feature>
<feature type="glycosylation site" description="N-linked (GlcNAc...) asparagine; by host" evidence="8">
    <location>
        <position position="937"/>
    </location>
</feature>
<feature type="disulfide bond" evidence="5">
    <location>
        <begin position="34"/>
        <end position="159"/>
    </location>
</feature>
<feature type="disulfide bond" evidence="5">
    <location>
        <begin position="68"/>
        <end position="165"/>
    </location>
</feature>
<feature type="disulfide bond" evidence="5">
    <location>
        <begin position="117"/>
        <end position="136"/>
    </location>
</feature>
<feature type="disulfide bond" evidence="5">
    <location>
        <begin position="141"/>
        <end position="146"/>
    </location>
</feature>
<feature type="disulfide bond" evidence="5">
    <location>
        <begin position="183"/>
        <end position="193"/>
    </location>
</feature>
<feature type="disulfide bond" evidence="5">
    <location>
        <begin position="218"/>
        <end position="257"/>
    </location>
</feature>
<feature type="disulfide bond" evidence="5">
    <location>
        <begin position="386"/>
        <end position="445"/>
    </location>
</feature>
<feature type="disulfide bond" evidence="5">
    <location>
        <begin position="390"/>
        <end position="399"/>
    </location>
</feature>
<feature type="disulfide bond" evidence="5">
    <location>
        <begin position="415"/>
        <end position="434"/>
    </location>
</feature>
<feature type="disulfide bond" evidence="5">
    <location>
        <begin position="462"/>
        <end position="485"/>
    </location>
</feature>
<feature type="disulfide bond" evidence="2">
    <location>
        <begin position="745"/>
        <end position="780"/>
    </location>
</feature>
<feature type="disulfide bond" evidence="2">
    <location>
        <begin position="749"/>
        <end position="787"/>
    </location>
</feature>
<feature type="disulfide bond" evidence="2">
    <location>
        <begin position="761"/>
        <end position="894"/>
    </location>
</feature>
<feature type="disulfide bond" evidence="2">
    <location>
        <begin position="775"/>
        <end position="905"/>
    </location>
</feature>
<feature type="disulfide bond" evidence="2">
    <location>
        <begin position="790"/>
        <end position="913"/>
    </location>
</feature>
<feature type="disulfide bond" evidence="2">
    <location>
        <begin position="816"/>
        <end position="825"/>
    </location>
</feature>
<feature type="disulfide bond" evidence="2">
    <location>
        <begin position="833"/>
        <end position="842"/>
    </location>
</feature>
<feature type="disulfide bond" evidence="2">
    <location>
        <begin position="873"/>
        <end position="877"/>
    </location>
</feature>
<feature type="disulfide bond" evidence="2">
    <location>
        <begin position="979"/>
        <end position="1009"/>
    </location>
</feature>
<feature type="disulfide bond" evidence="2">
    <location>
        <begin position="1002"/>
        <end position="1054"/>
    </location>
</feature>
<feature type="disulfide bond" evidence="2">
    <location>
        <begin position="1019"/>
        <end position="1024"/>
    </location>
</feature>
<feature type="disulfide bond" evidence="2">
    <location>
        <begin position="1055"/>
        <end position="1060"/>
    </location>
</feature>
<feature type="disulfide bond" evidence="5">
    <location>
        <begin position="1094"/>
        <end position="1098"/>
    </location>
</feature>
<feature type="strand" evidence="12">
    <location>
        <begin position="667"/>
        <end position="669"/>
    </location>
</feature>
<feature type="strand" evidence="12">
    <location>
        <begin position="673"/>
        <end position="675"/>
    </location>
</feature>
<feature type="helix" evidence="12">
    <location>
        <begin position="678"/>
        <end position="680"/>
    </location>
</feature>
<feature type="strand" evidence="12">
    <location>
        <begin position="682"/>
        <end position="690"/>
    </location>
</feature>
<feature type="strand" evidence="12">
    <location>
        <begin position="695"/>
        <end position="701"/>
    </location>
</feature>
<feature type="turn" evidence="12">
    <location>
        <begin position="704"/>
        <end position="706"/>
    </location>
</feature>
<feature type="strand" evidence="12">
    <location>
        <begin position="707"/>
        <end position="709"/>
    </location>
</feature>
<feature type="strand" evidence="12">
    <location>
        <begin position="711"/>
        <end position="717"/>
    </location>
</feature>
<feature type="strand" evidence="12">
    <location>
        <begin position="721"/>
        <end position="747"/>
    </location>
</feature>
<feature type="helix" evidence="12">
    <location>
        <begin position="749"/>
        <end position="751"/>
    </location>
</feature>
<feature type="helix" evidence="12">
    <location>
        <begin position="755"/>
        <end position="758"/>
    </location>
</feature>
<feature type="strand" evidence="12">
    <location>
        <begin position="759"/>
        <end position="769"/>
    </location>
</feature>
<feature type="strand" evidence="13">
    <location>
        <begin position="773"/>
        <end position="776"/>
    </location>
</feature>
<feature type="strand" evidence="12">
    <location>
        <begin position="786"/>
        <end position="819"/>
    </location>
</feature>
<feature type="strand" evidence="12">
    <location>
        <begin position="822"/>
        <end position="829"/>
    </location>
</feature>
<feature type="strand" evidence="12">
    <location>
        <begin position="833"/>
        <end position="835"/>
    </location>
</feature>
<feature type="strand" evidence="12">
    <location>
        <begin position="837"/>
        <end position="844"/>
    </location>
</feature>
<feature type="strand" evidence="12">
    <location>
        <begin position="855"/>
        <end position="860"/>
    </location>
</feature>
<feature type="helix" evidence="12">
    <location>
        <begin position="862"/>
        <end position="864"/>
    </location>
</feature>
<feature type="strand" evidence="12">
    <location>
        <begin position="866"/>
        <end position="870"/>
    </location>
</feature>
<feature type="strand" evidence="12">
    <location>
        <begin position="885"/>
        <end position="888"/>
    </location>
</feature>
<feature type="strand" evidence="12">
    <location>
        <begin position="891"/>
        <end position="893"/>
    </location>
</feature>
<feature type="strand" evidence="12">
    <location>
        <begin position="901"/>
        <end position="904"/>
    </location>
</feature>
<feature type="strand" evidence="12">
    <location>
        <begin position="912"/>
        <end position="915"/>
    </location>
</feature>
<feature type="helix" evidence="12">
    <location>
        <begin position="922"/>
        <end position="928"/>
    </location>
</feature>
<feature type="helix" evidence="12">
    <location>
        <begin position="929"/>
        <end position="932"/>
    </location>
</feature>
<feature type="strand" evidence="12">
    <location>
        <begin position="933"/>
        <end position="936"/>
    </location>
</feature>
<feature type="strand" evidence="12">
    <location>
        <begin position="939"/>
        <end position="943"/>
    </location>
</feature>
<feature type="strand" evidence="12">
    <location>
        <begin position="945"/>
        <end position="951"/>
    </location>
</feature>
<feature type="strand" evidence="12">
    <location>
        <begin position="958"/>
        <end position="965"/>
    </location>
</feature>
<feature type="strand" evidence="12">
    <location>
        <begin position="980"/>
        <end position="993"/>
    </location>
</feature>
<feature type="strand" evidence="12">
    <location>
        <begin position="998"/>
        <end position="1019"/>
    </location>
</feature>
<feature type="strand" evidence="12">
    <location>
        <begin position="1024"/>
        <end position="1043"/>
    </location>
</feature>
<feature type="strand" evidence="12">
    <location>
        <begin position="1052"/>
        <end position="1056"/>
    </location>
</feature>
<name>GP_PUUMP</name>